<proteinExistence type="inferred from homology"/>
<sequence length="656" mass="75228">MLMSQITIILPDNSTKVFDHEPTALEVAMSIGPRLAKETLGAKLNGSTEISDLRTVLKDQTKVALVTTKSPESVEVVRHSCAHIMAQAIQDIWPEVKVTIGPVIDNGFYYDFDSPFAFTEEHFEKIEKKMSEIVSKDLPIHREDWPIQKAIETFKGMNERFKVELIEDLAKKGETTVGIYFNGTSWFDLCRGPHIQSTGQIKAFKLLSVAGAYWRGDEKNAQLQRVYATAFNDKKDLETYLHNIEEAKKRDHRKLGKELGMFYFNELAPGSPFFTGKGATVYNSLQTYLRELYFETGYQEVITPQIFDVNLFHTSGHYQNYKENMFFTKVDERDFASKPMNCPSHCLLYNSEKYSYRDLPIKMADFGRLHRYEKSGAMHGLTRVRTFCQDDAHIFCRMDQLQEEIAKFMNLLNRVYDKLGMGNYKIFLSTRPDNRMGSEEYWDMAEGALAEALKSLNLPFELNPGDGAFYGPKLDIMFVDALNRPWQLGTLQVDPNLPQAFDLKYTGEDNKEHRPVMLHRAILGSLERFIGVYLEHTAGHLPPWMMPVQVAILNVTDRVNSFCEELQNSLKGHSVRVEFDRRNEKLNYKIREAQLQKIPYMIIVGDKEAESRTVSLRLRDGSEHKGLTVDQVMNLITTDIKTRSLQSSLAKSATTN</sequence>
<gene>
    <name evidence="1" type="primary">thrS</name>
    <name type="ordered locus">Bd1617</name>
</gene>
<dbReference type="EC" id="6.1.1.3" evidence="1"/>
<dbReference type="EMBL" id="BX842650">
    <property type="protein sequence ID" value="CAE79494.1"/>
    <property type="molecule type" value="Genomic_DNA"/>
</dbReference>
<dbReference type="RefSeq" id="WP_011164096.1">
    <property type="nucleotide sequence ID" value="NC_005363.1"/>
</dbReference>
<dbReference type="SMR" id="Q6MML0"/>
<dbReference type="STRING" id="264462.Bd1617"/>
<dbReference type="GeneID" id="93012608"/>
<dbReference type="KEGG" id="bba:Bd1617"/>
<dbReference type="eggNOG" id="COG0441">
    <property type="taxonomic scope" value="Bacteria"/>
</dbReference>
<dbReference type="HOGENOM" id="CLU_008554_0_1_7"/>
<dbReference type="Proteomes" id="UP000008080">
    <property type="component" value="Chromosome"/>
</dbReference>
<dbReference type="GO" id="GO:0005737">
    <property type="term" value="C:cytoplasm"/>
    <property type="evidence" value="ECO:0007669"/>
    <property type="project" value="UniProtKB-SubCell"/>
</dbReference>
<dbReference type="GO" id="GO:0005524">
    <property type="term" value="F:ATP binding"/>
    <property type="evidence" value="ECO:0007669"/>
    <property type="project" value="UniProtKB-UniRule"/>
</dbReference>
<dbReference type="GO" id="GO:0046872">
    <property type="term" value="F:metal ion binding"/>
    <property type="evidence" value="ECO:0007669"/>
    <property type="project" value="UniProtKB-KW"/>
</dbReference>
<dbReference type="GO" id="GO:0004829">
    <property type="term" value="F:threonine-tRNA ligase activity"/>
    <property type="evidence" value="ECO:0007669"/>
    <property type="project" value="UniProtKB-UniRule"/>
</dbReference>
<dbReference type="GO" id="GO:0000049">
    <property type="term" value="F:tRNA binding"/>
    <property type="evidence" value="ECO:0007669"/>
    <property type="project" value="UniProtKB-KW"/>
</dbReference>
<dbReference type="GO" id="GO:0006435">
    <property type="term" value="P:threonyl-tRNA aminoacylation"/>
    <property type="evidence" value="ECO:0007669"/>
    <property type="project" value="UniProtKB-UniRule"/>
</dbReference>
<dbReference type="CDD" id="cd01667">
    <property type="entry name" value="TGS_ThrRS"/>
    <property type="match status" value="1"/>
</dbReference>
<dbReference type="CDD" id="cd00860">
    <property type="entry name" value="ThrRS_anticodon"/>
    <property type="match status" value="1"/>
</dbReference>
<dbReference type="CDD" id="cd00771">
    <property type="entry name" value="ThrRS_core"/>
    <property type="match status" value="1"/>
</dbReference>
<dbReference type="FunFam" id="3.30.930.10:FF:000002">
    <property type="entry name" value="Threonine--tRNA ligase"/>
    <property type="match status" value="1"/>
</dbReference>
<dbReference type="FunFam" id="3.40.50.800:FF:000001">
    <property type="entry name" value="Threonine--tRNA ligase"/>
    <property type="match status" value="1"/>
</dbReference>
<dbReference type="FunFam" id="3.30.980.10:FF:000005">
    <property type="entry name" value="Threonyl-tRNA synthetase, mitochondrial"/>
    <property type="match status" value="1"/>
</dbReference>
<dbReference type="Gene3D" id="3.10.20.30">
    <property type="match status" value="1"/>
</dbReference>
<dbReference type="Gene3D" id="3.30.54.20">
    <property type="match status" value="1"/>
</dbReference>
<dbReference type="Gene3D" id="3.40.50.800">
    <property type="entry name" value="Anticodon-binding domain"/>
    <property type="match status" value="1"/>
</dbReference>
<dbReference type="Gene3D" id="3.30.930.10">
    <property type="entry name" value="Bira Bifunctional Protein, Domain 2"/>
    <property type="match status" value="1"/>
</dbReference>
<dbReference type="Gene3D" id="3.30.980.10">
    <property type="entry name" value="Threonyl-trna Synthetase, Chain A, domain 2"/>
    <property type="match status" value="1"/>
</dbReference>
<dbReference type="HAMAP" id="MF_00184">
    <property type="entry name" value="Thr_tRNA_synth"/>
    <property type="match status" value="1"/>
</dbReference>
<dbReference type="InterPro" id="IPR002314">
    <property type="entry name" value="aa-tRNA-synt_IIb"/>
</dbReference>
<dbReference type="InterPro" id="IPR006195">
    <property type="entry name" value="aa-tRNA-synth_II"/>
</dbReference>
<dbReference type="InterPro" id="IPR045864">
    <property type="entry name" value="aa-tRNA-synth_II/BPL/LPL"/>
</dbReference>
<dbReference type="InterPro" id="IPR004154">
    <property type="entry name" value="Anticodon-bd"/>
</dbReference>
<dbReference type="InterPro" id="IPR036621">
    <property type="entry name" value="Anticodon-bd_dom_sf"/>
</dbReference>
<dbReference type="InterPro" id="IPR012675">
    <property type="entry name" value="Beta-grasp_dom_sf"/>
</dbReference>
<dbReference type="InterPro" id="IPR004095">
    <property type="entry name" value="TGS"/>
</dbReference>
<dbReference type="InterPro" id="IPR012676">
    <property type="entry name" value="TGS-like"/>
</dbReference>
<dbReference type="InterPro" id="IPR002320">
    <property type="entry name" value="Thr-tRNA-ligase_IIa"/>
</dbReference>
<dbReference type="InterPro" id="IPR018163">
    <property type="entry name" value="Thr/Ala-tRNA-synth_IIc_edit"/>
</dbReference>
<dbReference type="InterPro" id="IPR047246">
    <property type="entry name" value="ThrRS_anticodon"/>
</dbReference>
<dbReference type="InterPro" id="IPR033728">
    <property type="entry name" value="ThrRS_core"/>
</dbReference>
<dbReference type="InterPro" id="IPR012947">
    <property type="entry name" value="tRNA_SAD"/>
</dbReference>
<dbReference type="NCBIfam" id="TIGR00418">
    <property type="entry name" value="thrS"/>
    <property type="match status" value="1"/>
</dbReference>
<dbReference type="PANTHER" id="PTHR11451:SF44">
    <property type="entry name" value="THREONINE--TRNA LIGASE, CHLOROPLASTIC_MITOCHONDRIAL 2"/>
    <property type="match status" value="1"/>
</dbReference>
<dbReference type="PANTHER" id="PTHR11451">
    <property type="entry name" value="THREONINE-TRNA LIGASE"/>
    <property type="match status" value="1"/>
</dbReference>
<dbReference type="Pfam" id="PF03129">
    <property type="entry name" value="HGTP_anticodon"/>
    <property type="match status" value="1"/>
</dbReference>
<dbReference type="Pfam" id="PF02824">
    <property type="entry name" value="TGS"/>
    <property type="match status" value="1"/>
</dbReference>
<dbReference type="Pfam" id="PF00587">
    <property type="entry name" value="tRNA-synt_2b"/>
    <property type="match status" value="1"/>
</dbReference>
<dbReference type="Pfam" id="PF07973">
    <property type="entry name" value="tRNA_SAD"/>
    <property type="match status" value="1"/>
</dbReference>
<dbReference type="PRINTS" id="PR01047">
    <property type="entry name" value="TRNASYNTHTHR"/>
</dbReference>
<dbReference type="SMART" id="SM00863">
    <property type="entry name" value="tRNA_SAD"/>
    <property type="match status" value="1"/>
</dbReference>
<dbReference type="SUPFAM" id="SSF52954">
    <property type="entry name" value="Class II aaRS ABD-related"/>
    <property type="match status" value="1"/>
</dbReference>
<dbReference type="SUPFAM" id="SSF55681">
    <property type="entry name" value="Class II aaRS and biotin synthetases"/>
    <property type="match status" value="1"/>
</dbReference>
<dbReference type="SUPFAM" id="SSF81271">
    <property type="entry name" value="TGS-like"/>
    <property type="match status" value="1"/>
</dbReference>
<dbReference type="SUPFAM" id="SSF55186">
    <property type="entry name" value="ThrRS/AlaRS common domain"/>
    <property type="match status" value="1"/>
</dbReference>
<dbReference type="PROSITE" id="PS50862">
    <property type="entry name" value="AA_TRNA_LIGASE_II"/>
    <property type="match status" value="1"/>
</dbReference>
<dbReference type="PROSITE" id="PS51880">
    <property type="entry name" value="TGS"/>
    <property type="match status" value="1"/>
</dbReference>
<evidence type="ECO:0000255" key="1">
    <source>
        <dbReference type="HAMAP-Rule" id="MF_00184"/>
    </source>
</evidence>
<evidence type="ECO:0000255" key="2">
    <source>
        <dbReference type="PROSITE-ProRule" id="PRU01228"/>
    </source>
</evidence>
<accession>Q6MML0</accession>
<name>SYT_BDEBA</name>
<organism>
    <name type="scientific">Bdellovibrio bacteriovorus (strain ATCC 15356 / DSM 50701 / NCIMB 9529 / HD100)</name>
    <dbReference type="NCBI Taxonomy" id="264462"/>
    <lineage>
        <taxon>Bacteria</taxon>
        <taxon>Pseudomonadati</taxon>
        <taxon>Bdellovibrionota</taxon>
        <taxon>Bdellovibrionia</taxon>
        <taxon>Bdellovibrionales</taxon>
        <taxon>Pseudobdellovibrionaceae</taxon>
        <taxon>Bdellovibrio</taxon>
    </lineage>
</organism>
<feature type="chain" id="PRO_0000100943" description="Threonine--tRNA ligase">
    <location>
        <begin position="1"/>
        <end position="656"/>
    </location>
</feature>
<feature type="domain" description="TGS" evidence="2">
    <location>
        <begin position="2"/>
        <end position="67"/>
    </location>
</feature>
<feature type="region of interest" description="Catalytic" evidence="1">
    <location>
        <begin position="251"/>
        <end position="542"/>
    </location>
</feature>
<feature type="binding site" evidence="1">
    <location>
        <position position="342"/>
    </location>
    <ligand>
        <name>Zn(2+)</name>
        <dbReference type="ChEBI" id="CHEBI:29105"/>
    </ligand>
</feature>
<feature type="binding site" evidence="1">
    <location>
        <position position="393"/>
    </location>
    <ligand>
        <name>Zn(2+)</name>
        <dbReference type="ChEBI" id="CHEBI:29105"/>
    </ligand>
</feature>
<feature type="binding site" evidence="1">
    <location>
        <position position="519"/>
    </location>
    <ligand>
        <name>Zn(2+)</name>
        <dbReference type="ChEBI" id="CHEBI:29105"/>
    </ligand>
</feature>
<reference key="1">
    <citation type="journal article" date="2004" name="Science">
        <title>A predator unmasked: life cycle of Bdellovibrio bacteriovorus from a genomic perspective.</title>
        <authorList>
            <person name="Rendulic S."/>
            <person name="Jagtap P."/>
            <person name="Rosinus A."/>
            <person name="Eppinger M."/>
            <person name="Baar C."/>
            <person name="Lanz C."/>
            <person name="Keller H."/>
            <person name="Lambert C."/>
            <person name="Evans K.J."/>
            <person name="Goesmann A."/>
            <person name="Meyer F."/>
            <person name="Sockett R.E."/>
            <person name="Schuster S.C."/>
        </authorList>
    </citation>
    <scope>NUCLEOTIDE SEQUENCE [LARGE SCALE GENOMIC DNA]</scope>
    <source>
        <strain>ATCC 15356 / DSM 50701 / NCIMB 9529 / HD100</strain>
    </source>
</reference>
<protein>
    <recommendedName>
        <fullName evidence="1">Threonine--tRNA ligase</fullName>
        <ecNumber evidence="1">6.1.1.3</ecNumber>
    </recommendedName>
    <alternativeName>
        <fullName evidence="1">Threonyl-tRNA synthetase</fullName>
        <shortName evidence="1">ThrRS</shortName>
    </alternativeName>
</protein>
<keyword id="KW-0030">Aminoacyl-tRNA synthetase</keyword>
<keyword id="KW-0067">ATP-binding</keyword>
<keyword id="KW-0963">Cytoplasm</keyword>
<keyword id="KW-0436">Ligase</keyword>
<keyword id="KW-0479">Metal-binding</keyword>
<keyword id="KW-0547">Nucleotide-binding</keyword>
<keyword id="KW-0648">Protein biosynthesis</keyword>
<keyword id="KW-1185">Reference proteome</keyword>
<keyword id="KW-0694">RNA-binding</keyword>
<keyword id="KW-0820">tRNA-binding</keyword>
<keyword id="KW-0862">Zinc</keyword>
<comment type="function">
    <text evidence="1">Catalyzes the attachment of threonine to tRNA(Thr) in a two-step reaction: L-threonine is first activated by ATP to form Thr-AMP and then transferred to the acceptor end of tRNA(Thr). Also edits incorrectly charged L-seryl-tRNA(Thr).</text>
</comment>
<comment type="catalytic activity">
    <reaction evidence="1">
        <text>tRNA(Thr) + L-threonine + ATP = L-threonyl-tRNA(Thr) + AMP + diphosphate + H(+)</text>
        <dbReference type="Rhea" id="RHEA:24624"/>
        <dbReference type="Rhea" id="RHEA-COMP:9670"/>
        <dbReference type="Rhea" id="RHEA-COMP:9704"/>
        <dbReference type="ChEBI" id="CHEBI:15378"/>
        <dbReference type="ChEBI" id="CHEBI:30616"/>
        <dbReference type="ChEBI" id="CHEBI:33019"/>
        <dbReference type="ChEBI" id="CHEBI:57926"/>
        <dbReference type="ChEBI" id="CHEBI:78442"/>
        <dbReference type="ChEBI" id="CHEBI:78534"/>
        <dbReference type="ChEBI" id="CHEBI:456215"/>
        <dbReference type="EC" id="6.1.1.3"/>
    </reaction>
</comment>
<comment type="cofactor">
    <cofactor evidence="1">
        <name>Zn(2+)</name>
        <dbReference type="ChEBI" id="CHEBI:29105"/>
    </cofactor>
    <text evidence="1">Binds 1 zinc ion per subunit.</text>
</comment>
<comment type="subunit">
    <text evidence="1">Homodimer.</text>
</comment>
<comment type="subcellular location">
    <subcellularLocation>
        <location evidence="1">Cytoplasm</location>
    </subcellularLocation>
</comment>
<comment type="similarity">
    <text evidence="1">Belongs to the class-II aminoacyl-tRNA synthetase family.</text>
</comment>